<evidence type="ECO:0000250" key="1">
    <source>
        <dbReference type="UniProtKB" id="P0AES6"/>
    </source>
</evidence>
<evidence type="ECO:0000255" key="2">
    <source>
        <dbReference type="PROSITE-ProRule" id="PRU00995"/>
    </source>
</evidence>
<evidence type="ECO:0000305" key="3"/>
<proteinExistence type="inferred from homology"/>
<accession>Q9X3Y5</accession>
<feature type="chain" id="PRO_0000145293" description="DNA gyrase subunit B">
    <location>
        <begin position="1" status="less than"/>
        <end position="404" status="greater than"/>
    </location>
</feature>
<feature type="domain" description="Toprim" evidence="2">
    <location>
        <begin position="321"/>
        <end position="404" status="greater than"/>
    </location>
</feature>
<feature type="binding site" evidence="2">
    <location>
        <position position="327"/>
    </location>
    <ligand>
        <name>Mg(2+)</name>
        <dbReference type="ChEBI" id="CHEBI:18420"/>
        <label>1</label>
        <note>catalytic</note>
    </ligand>
</feature>
<feature type="binding site" evidence="2">
    <location>
        <position position="400"/>
    </location>
    <ligand>
        <name>Mg(2+)</name>
        <dbReference type="ChEBI" id="CHEBI:18420"/>
        <label>1</label>
        <note>catalytic</note>
    </ligand>
</feature>
<feature type="binding site" evidence="2">
    <location>
        <position position="400"/>
    </location>
    <ligand>
        <name>Mg(2+)</name>
        <dbReference type="ChEBI" id="CHEBI:18420"/>
        <label>2</label>
    </ligand>
</feature>
<feature type="binding site" evidence="2">
    <location>
        <position position="402"/>
    </location>
    <ligand>
        <name>Mg(2+)</name>
        <dbReference type="ChEBI" id="CHEBI:18420"/>
        <label>2</label>
    </ligand>
</feature>
<feature type="site" description="Interaction with DNA" evidence="2">
    <location>
        <position position="352"/>
    </location>
</feature>
<feature type="site" description="Interaction with DNA" evidence="2">
    <location>
        <position position="355"/>
    </location>
</feature>
<feature type="non-terminal residue">
    <location>
        <position position="1"/>
    </location>
</feature>
<feature type="non-terminal residue">
    <location>
        <position position="404"/>
    </location>
</feature>
<dbReference type="EC" id="5.6.2.2" evidence="2"/>
<dbReference type="EMBL" id="AF090332">
    <property type="protein sequence ID" value="AAD25957.1"/>
    <property type="molecule type" value="Genomic_DNA"/>
</dbReference>
<dbReference type="SMR" id="Q9X3Y5"/>
<dbReference type="STRING" id="1405.B7492_00025"/>
<dbReference type="eggNOG" id="COG0187">
    <property type="taxonomic scope" value="Bacteria"/>
</dbReference>
<dbReference type="GO" id="GO:0005737">
    <property type="term" value="C:cytoplasm"/>
    <property type="evidence" value="ECO:0007669"/>
    <property type="project" value="UniProtKB-SubCell"/>
</dbReference>
<dbReference type="GO" id="GO:0005524">
    <property type="term" value="F:ATP binding"/>
    <property type="evidence" value="ECO:0007669"/>
    <property type="project" value="UniProtKB-KW"/>
</dbReference>
<dbReference type="GO" id="GO:0003677">
    <property type="term" value="F:DNA binding"/>
    <property type="evidence" value="ECO:0007669"/>
    <property type="project" value="UniProtKB-KW"/>
</dbReference>
<dbReference type="GO" id="GO:0034335">
    <property type="term" value="F:DNA negative supercoiling activity"/>
    <property type="evidence" value="ECO:0007669"/>
    <property type="project" value="UniProtKB-ARBA"/>
</dbReference>
<dbReference type="GO" id="GO:0046872">
    <property type="term" value="F:metal ion binding"/>
    <property type="evidence" value="ECO:0007669"/>
    <property type="project" value="UniProtKB-KW"/>
</dbReference>
<dbReference type="GO" id="GO:0006265">
    <property type="term" value="P:DNA topological change"/>
    <property type="evidence" value="ECO:0007669"/>
    <property type="project" value="InterPro"/>
</dbReference>
<dbReference type="CDD" id="cd00822">
    <property type="entry name" value="TopoII_Trans_DNA_gyrase"/>
    <property type="match status" value="1"/>
</dbReference>
<dbReference type="FunFam" id="3.30.230.10:FF:000005">
    <property type="entry name" value="DNA gyrase subunit B"/>
    <property type="match status" value="1"/>
</dbReference>
<dbReference type="Gene3D" id="3.30.230.10">
    <property type="match status" value="1"/>
</dbReference>
<dbReference type="Gene3D" id="3.40.50.670">
    <property type="match status" value="1"/>
</dbReference>
<dbReference type="Gene3D" id="3.30.565.10">
    <property type="entry name" value="Histidine kinase-like ATPase, C-terminal domain"/>
    <property type="match status" value="1"/>
</dbReference>
<dbReference type="InterPro" id="IPR036890">
    <property type="entry name" value="HATPase_C_sf"/>
</dbReference>
<dbReference type="InterPro" id="IPR020568">
    <property type="entry name" value="Ribosomal_Su5_D2-typ_SF"/>
</dbReference>
<dbReference type="InterPro" id="IPR014721">
    <property type="entry name" value="Ribsml_uS5_D2-typ_fold_subgr"/>
</dbReference>
<dbReference type="InterPro" id="IPR001241">
    <property type="entry name" value="Topo_IIA"/>
</dbReference>
<dbReference type="InterPro" id="IPR013760">
    <property type="entry name" value="Topo_IIA-like_dom_sf"/>
</dbReference>
<dbReference type="InterPro" id="IPR000565">
    <property type="entry name" value="Topo_IIA_B"/>
</dbReference>
<dbReference type="InterPro" id="IPR013759">
    <property type="entry name" value="Topo_IIA_B_C"/>
</dbReference>
<dbReference type="InterPro" id="IPR013506">
    <property type="entry name" value="Topo_IIA_bsu_dom2"/>
</dbReference>
<dbReference type="InterPro" id="IPR018522">
    <property type="entry name" value="TopoIIA_CS"/>
</dbReference>
<dbReference type="InterPro" id="IPR006171">
    <property type="entry name" value="TOPRIM_dom"/>
</dbReference>
<dbReference type="PANTHER" id="PTHR45866:SF1">
    <property type="entry name" value="DNA GYRASE SUBUNIT B, MITOCHONDRIAL"/>
    <property type="match status" value="1"/>
</dbReference>
<dbReference type="PANTHER" id="PTHR45866">
    <property type="entry name" value="DNA GYRASE/TOPOISOMERASE SUBUNIT B"/>
    <property type="match status" value="1"/>
</dbReference>
<dbReference type="Pfam" id="PF00204">
    <property type="entry name" value="DNA_gyraseB"/>
    <property type="match status" value="1"/>
</dbReference>
<dbReference type="Pfam" id="PF01751">
    <property type="entry name" value="Toprim"/>
    <property type="match status" value="1"/>
</dbReference>
<dbReference type="PRINTS" id="PR01159">
    <property type="entry name" value="DNAGYRASEB"/>
</dbReference>
<dbReference type="PRINTS" id="PR00418">
    <property type="entry name" value="TPI2FAMILY"/>
</dbReference>
<dbReference type="SMART" id="SM00433">
    <property type="entry name" value="TOP2c"/>
    <property type="match status" value="1"/>
</dbReference>
<dbReference type="SUPFAM" id="SSF55874">
    <property type="entry name" value="ATPase domain of HSP90 chaperone/DNA topoisomerase II/histidine kinase"/>
    <property type="match status" value="1"/>
</dbReference>
<dbReference type="SUPFAM" id="SSF54211">
    <property type="entry name" value="Ribosomal protein S5 domain 2-like"/>
    <property type="match status" value="1"/>
</dbReference>
<dbReference type="SUPFAM" id="SSF56719">
    <property type="entry name" value="Type II DNA topoisomerase"/>
    <property type="match status" value="1"/>
</dbReference>
<dbReference type="PROSITE" id="PS00177">
    <property type="entry name" value="TOPOISOMERASE_II"/>
    <property type="match status" value="1"/>
</dbReference>
<dbReference type="PROSITE" id="PS50880">
    <property type="entry name" value="TOPRIM"/>
    <property type="match status" value="1"/>
</dbReference>
<keyword id="KW-0067">ATP-binding</keyword>
<keyword id="KW-0963">Cytoplasm</keyword>
<keyword id="KW-0238">DNA-binding</keyword>
<keyword id="KW-0413">Isomerase</keyword>
<keyword id="KW-0460">Magnesium</keyword>
<keyword id="KW-0479">Metal-binding</keyword>
<keyword id="KW-0547">Nucleotide-binding</keyword>
<keyword id="KW-0799">Topoisomerase</keyword>
<reference key="1">
    <citation type="journal article" date="1999" name="Appl. Environ. Microbiol.">
        <title>Cloning and nucleotide sequence analysis of gyrB of Bacillus cereus, B. thuringiensis, B. mycoides, and B. anthracis and their application to the detection of B. cereus in rice.</title>
        <authorList>
            <person name="Yamada S."/>
            <person name="Ohashi E."/>
            <person name="Agata N."/>
            <person name="Venkateswaran K."/>
        </authorList>
    </citation>
    <scope>NUCLEOTIDE SEQUENCE [GENOMIC DNA]</scope>
    <source>
        <strain>ATCC 6462 / DSM 2048 / CCUG 26678 / LMG 7128 / NCTC 12974 / NRS 273</strain>
    </source>
</reference>
<protein>
    <recommendedName>
        <fullName>DNA gyrase subunit B</fullName>
        <ecNumber evidence="2">5.6.2.2</ecNumber>
    </recommendedName>
</protein>
<comment type="function">
    <text evidence="1">A type II topoisomerase that negatively supercoils closed circular double-stranded (ds) DNA in an ATP-dependent manner to modulate DNA topology and maintain chromosomes in an underwound state. Negative supercoiling favors strand separation, and DNA replication, transcription, recombination and repair, all of which involve strand separation. Also able to catalyze the interconversion of other topological isomers of dsDNA rings, including catenanes and knotted rings. Type II topoisomerases break and join 2 DNA strands simultaneously in an ATP-dependent manner.</text>
</comment>
<comment type="catalytic activity">
    <reaction evidence="2">
        <text>ATP-dependent breakage, passage and rejoining of double-stranded DNA.</text>
        <dbReference type="EC" id="5.6.2.2"/>
    </reaction>
</comment>
<comment type="cofactor">
    <cofactor evidence="2">
        <name>Mg(2+)</name>
        <dbReference type="ChEBI" id="CHEBI:18420"/>
    </cofactor>
    <cofactor evidence="2">
        <name>Mn(2+)</name>
        <dbReference type="ChEBI" id="CHEBI:29035"/>
    </cofactor>
    <cofactor evidence="2">
        <name>Ca(2+)</name>
        <dbReference type="ChEBI" id="CHEBI:29108"/>
    </cofactor>
    <text evidence="2">Binds two Mg(2+) per subunit. The magnesium ions form salt bridges with both the protein and the DNA. Can also accept other divalent metal cations, such as Mn(2+) or Ca(2+).</text>
</comment>
<comment type="subunit">
    <text evidence="1">Heterotetramer, composed of two GyrA and two GyrB chains. In the heterotetramer, GyrA contains the active site tyrosine that forms a transient covalent intermediate with DNA, while GyrB binds cofactors and catalyzes ATP hydrolysis.</text>
</comment>
<comment type="subcellular location">
    <subcellularLocation>
        <location evidence="1">Cytoplasm</location>
    </subcellularLocation>
</comment>
<comment type="miscellaneous">
    <text evidence="1">Few gyrases are as efficient as E.coli at forming negative supercoils. Not all organisms have 2 type II topoisomerases; in organisms with a single type II topoisomerase this enzyme also has to decatenate newly replicated chromosomes.</text>
</comment>
<comment type="similarity">
    <text evidence="3">Belongs to the type II topoisomerase GyrB family.</text>
</comment>
<name>GYRB_BACMY</name>
<organism>
    <name type="scientific">Bacillus mycoides</name>
    <dbReference type="NCBI Taxonomy" id="1405"/>
    <lineage>
        <taxon>Bacteria</taxon>
        <taxon>Bacillati</taxon>
        <taxon>Bacillota</taxon>
        <taxon>Bacilli</taxon>
        <taxon>Bacillales</taxon>
        <taxon>Bacillaceae</taxon>
        <taxon>Bacillus</taxon>
        <taxon>Bacillus cereus group</taxon>
    </lineage>
</organism>
<gene>
    <name type="primary">gyrB</name>
</gene>
<sequence length="404" mass="44896">HAGGKFDGGGYKVSGGLHGVGASVVNALSTELEVFVHRDGKIHYQKYERGVPAADLRVIGETDRTGTITRFKPDSEIFTETTEYEFDTLATRMRELAFLNRNIKLTIEDKREHKQKKEFHYEGGIKSYVEHLNRSKQPIHEEPVYVDGSKDGIQVEVALQYNEGYTNHIYSFTNNIHTYEGGTHEVGFKTALTRVINDYGRKNNILKDADSNLTGEDVREGLTAIVSIKHPNPQFEGQTKTKLGNSEARTITESVFSEAFEKFLLENPNVARKIIDKGTMAARARVAAKKARELTRRKSALEVSSLPGKLADCSSKDPAISEIYIVEGDSAGGSAKQGRDRHFQAILPLKGKIINVEKARLDKILSNDEVRTIITAIGTNIGGDFAIEKARYHKVIIMTDADVD</sequence>